<dbReference type="EC" id="2.7.7.6" evidence="1"/>
<dbReference type="EMBL" id="CR378663">
    <property type="protein sequence ID" value="CAG18629.1"/>
    <property type="molecule type" value="Genomic_DNA"/>
</dbReference>
<dbReference type="RefSeq" id="WP_011217007.1">
    <property type="nucleotide sequence ID" value="NC_006370.1"/>
</dbReference>
<dbReference type="SMR" id="Q6LVP6"/>
<dbReference type="STRING" id="298386.PBPRA0190"/>
<dbReference type="KEGG" id="ppr:PBPRA0190"/>
<dbReference type="eggNOG" id="COG1758">
    <property type="taxonomic scope" value="Bacteria"/>
</dbReference>
<dbReference type="HOGENOM" id="CLU_125406_5_3_6"/>
<dbReference type="Proteomes" id="UP000000593">
    <property type="component" value="Chromosome 1"/>
</dbReference>
<dbReference type="GO" id="GO:0000428">
    <property type="term" value="C:DNA-directed RNA polymerase complex"/>
    <property type="evidence" value="ECO:0007669"/>
    <property type="project" value="UniProtKB-KW"/>
</dbReference>
<dbReference type="GO" id="GO:0003677">
    <property type="term" value="F:DNA binding"/>
    <property type="evidence" value="ECO:0007669"/>
    <property type="project" value="UniProtKB-UniRule"/>
</dbReference>
<dbReference type="GO" id="GO:0003899">
    <property type="term" value="F:DNA-directed RNA polymerase activity"/>
    <property type="evidence" value="ECO:0007669"/>
    <property type="project" value="UniProtKB-UniRule"/>
</dbReference>
<dbReference type="GO" id="GO:0006351">
    <property type="term" value="P:DNA-templated transcription"/>
    <property type="evidence" value="ECO:0007669"/>
    <property type="project" value="UniProtKB-UniRule"/>
</dbReference>
<dbReference type="FunFam" id="3.90.940.10:FF:000001">
    <property type="entry name" value="DNA-directed RNA polymerase subunit omega"/>
    <property type="match status" value="1"/>
</dbReference>
<dbReference type="Gene3D" id="3.90.940.10">
    <property type="match status" value="1"/>
</dbReference>
<dbReference type="HAMAP" id="MF_00366">
    <property type="entry name" value="RNApol_bact_RpoZ"/>
    <property type="match status" value="1"/>
</dbReference>
<dbReference type="InterPro" id="IPR003716">
    <property type="entry name" value="DNA-dir_RNA_pol_omega"/>
</dbReference>
<dbReference type="InterPro" id="IPR006110">
    <property type="entry name" value="Pol_omega/Rpo6/RPB6"/>
</dbReference>
<dbReference type="InterPro" id="IPR036161">
    <property type="entry name" value="RPB6/omega-like_sf"/>
</dbReference>
<dbReference type="NCBIfam" id="TIGR00690">
    <property type="entry name" value="rpoZ"/>
    <property type="match status" value="1"/>
</dbReference>
<dbReference type="PANTHER" id="PTHR34476">
    <property type="entry name" value="DNA-DIRECTED RNA POLYMERASE SUBUNIT OMEGA"/>
    <property type="match status" value="1"/>
</dbReference>
<dbReference type="PANTHER" id="PTHR34476:SF1">
    <property type="entry name" value="DNA-DIRECTED RNA POLYMERASE SUBUNIT OMEGA"/>
    <property type="match status" value="1"/>
</dbReference>
<dbReference type="Pfam" id="PF01192">
    <property type="entry name" value="RNA_pol_Rpb6"/>
    <property type="match status" value="1"/>
</dbReference>
<dbReference type="SMART" id="SM01409">
    <property type="entry name" value="RNA_pol_Rpb6"/>
    <property type="match status" value="1"/>
</dbReference>
<dbReference type="SUPFAM" id="SSF63562">
    <property type="entry name" value="RPB6/omega subunit-like"/>
    <property type="match status" value="1"/>
</dbReference>
<sequence length="94" mass="10580">MARVTVQDAVDKIGNRFDLIQIASRRARQLQTGGKDPLVPEENDKYTVIALREIEEGLITKDILDARERQELQEQEAAELAAVSAIAGDHHHHR</sequence>
<comment type="function">
    <text evidence="1">Promotes RNA polymerase assembly. Latches the N- and C-terminal regions of the beta' subunit thereby facilitating its interaction with the beta and alpha subunits.</text>
</comment>
<comment type="catalytic activity">
    <reaction evidence="1">
        <text>RNA(n) + a ribonucleoside 5'-triphosphate = RNA(n+1) + diphosphate</text>
        <dbReference type="Rhea" id="RHEA:21248"/>
        <dbReference type="Rhea" id="RHEA-COMP:14527"/>
        <dbReference type="Rhea" id="RHEA-COMP:17342"/>
        <dbReference type="ChEBI" id="CHEBI:33019"/>
        <dbReference type="ChEBI" id="CHEBI:61557"/>
        <dbReference type="ChEBI" id="CHEBI:140395"/>
        <dbReference type="EC" id="2.7.7.6"/>
    </reaction>
</comment>
<comment type="subunit">
    <text evidence="1">The RNAP catalytic core consists of 2 alpha, 1 beta, 1 beta' and 1 omega subunit. When a sigma factor is associated with the core the holoenzyme is formed, which can initiate transcription.</text>
</comment>
<comment type="similarity">
    <text evidence="1">Belongs to the RNA polymerase subunit omega family.</text>
</comment>
<protein>
    <recommendedName>
        <fullName evidence="1">DNA-directed RNA polymerase subunit omega</fullName>
        <shortName evidence="1">RNAP omega subunit</shortName>
        <ecNumber evidence="1">2.7.7.6</ecNumber>
    </recommendedName>
    <alternativeName>
        <fullName evidence="1">RNA polymerase omega subunit</fullName>
    </alternativeName>
    <alternativeName>
        <fullName evidence="1">Transcriptase subunit omega</fullName>
    </alternativeName>
</protein>
<gene>
    <name evidence="1" type="primary">rpoZ</name>
    <name type="ordered locus">PBPRA0190</name>
</gene>
<name>RPOZ_PHOPR</name>
<proteinExistence type="inferred from homology"/>
<keyword id="KW-0240">DNA-directed RNA polymerase</keyword>
<keyword id="KW-0548">Nucleotidyltransferase</keyword>
<keyword id="KW-1185">Reference proteome</keyword>
<keyword id="KW-0804">Transcription</keyword>
<keyword id="KW-0808">Transferase</keyword>
<accession>Q6LVP6</accession>
<feature type="chain" id="PRO_0000237485" description="DNA-directed RNA polymerase subunit omega">
    <location>
        <begin position="1"/>
        <end position="94"/>
    </location>
</feature>
<reference key="1">
    <citation type="journal article" date="2005" name="Science">
        <title>Life at depth: Photobacterium profundum genome sequence and expression analysis.</title>
        <authorList>
            <person name="Vezzi A."/>
            <person name="Campanaro S."/>
            <person name="D'Angelo M."/>
            <person name="Simonato F."/>
            <person name="Vitulo N."/>
            <person name="Lauro F.M."/>
            <person name="Cestaro A."/>
            <person name="Malacrida G."/>
            <person name="Simionati B."/>
            <person name="Cannata N."/>
            <person name="Romualdi C."/>
            <person name="Bartlett D.H."/>
            <person name="Valle G."/>
        </authorList>
    </citation>
    <scope>NUCLEOTIDE SEQUENCE [LARGE SCALE GENOMIC DNA]</scope>
    <source>
        <strain>ATCC BAA-1253 / SS9</strain>
    </source>
</reference>
<organism>
    <name type="scientific">Photobacterium profundum (strain SS9)</name>
    <dbReference type="NCBI Taxonomy" id="298386"/>
    <lineage>
        <taxon>Bacteria</taxon>
        <taxon>Pseudomonadati</taxon>
        <taxon>Pseudomonadota</taxon>
        <taxon>Gammaproteobacteria</taxon>
        <taxon>Vibrionales</taxon>
        <taxon>Vibrionaceae</taxon>
        <taxon>Photobacterium</taxon>
    </lineage>
</organism>
<evidence type="ECO:0000255" key="1">
    <source>
        <dbReference type="HAMAP-Rule" id="MF_00366"/>
    </source>
</evidence>